<feature type="signal peptide" evidence="1">
    <location>
        <begin position="1"/>
        <end position="22"/>
    </location>
</feature>
<feature type="chain" id="PRO_0000022609" description="Keratinocyte differentiation-associated protein">
    <location>
        <begin position="23"/>
        <end position="99"/>
    </location>
</feature>
<feature type="splice variant" id="VSP_030856" description="In isoform 2." evidence="3">
    <location>
        <begin position="45"/>
        <end position="58"/>
    </location>
</feature>
<dbReference type="EMBL" id="AY359007">
    <property type="protein sequence ID" value="AAQ89366.1"/>
    <property type="molecule type" value="mRNA"/>
</dbReference>
<dbReference type="EMBL" id="BC130501">
    <property type="protein sequence ID" value="AAI30502.1"/>
    <property type="molecule type" value="mRNA"/>
</dbReference>
<dbReference type="CCDS" id="CCDS12462.1">
    <molecule id="P60985-1"/>
</dbReference>
<dbReference type="CCDS" id="CCDS59377.1">
    <molecule id="P60985-2"/>
</dbReference>
<dbReference type="RefSeq" id="NP_001231776.1">
    <molecule id="P60985-2"/>
    <property type="nucleotide sequence ID" value="NM_001244847.2"/>
</dbReference>
<dbReference type="RefSeq" id="NP_997275.1">
    <molecule id="P60985-1"/>
    <property type="nucleotide sequence ID" value="NM_207392.3"/>
</dbReference>
<dbReference type="RefSeq" id="XP_054176927.1">
    <molecule id="P60985-1"/>
    <property type="nucleotide sequence ID" value="XM_054320952.1"/>
</dbReference>
<dbReference type="SMR" id="P60985"/>
<dbReference type="FunCoup" id="P60985">
    <property type="interactions" value="22"/>
</dbReference>
<dbReference type="STRING" id="9606.ENSP00000339251"/>
<dbReference type="GlyCosmos" id="P60985">
    <property type="glycosylation" value="2 sites, 2 glycans"/>
</dbReference>
<dbReference type="GlyGen" id="P60985">
    <property type="glycosylation" value="2 sites, 2 O-linked glycans (2 sites)"/>
</dbReference>
<dbReference type="iPTMnet" id="P60985"/>
<dbReference type="PhosphoSitePlus" id="P60985"/>
<dbReference type="BioMuta" id="KRTDAP"/>
<dbReference type="jPOST" id="P60985"/>
<dbReference type="MassIVE" id="P60985"/>
<dbReference type="PaxDb" id="9606-ENSP00000339251"/>
<dbReference type="PeptideAtlas" id="P60985"/>
<dbReference type="ProteomicsDB" id="57243">
    <molecule id="P60985-1"/>
</dbReference>
<dbReference type="ProteomicsDB" id="57244">
    <molecule id="P60985-2"/>
</dbReference>
<dbReference type="Antibodypedia" id="74487">
    <property type="antibodies" value="4 antibodies from 4 providers"/>
</dbReference>
<dbReference type="DNASU" id="388533"/>
<dbReference type="Ensembl" id="ENST00000338897.4">
    <molecule id="P60985-1"/>
    <property type="protein sequence ID" value="ENSP00000339251.3"/>
    <property type="gene ID" value="ENSG00000188508.11"/>
</dbReference>
<dbReference type="Ensembl" id="ENST00000484218.6">
    <molecule id="P60985-2"/>
    <property type="protein sequence ID" value="ENSP00000470713.1"/>
    <property type="gene ID" value="ENSG00000188508.11"/>
</dbReference>
<dbReference type="GeneID" id="388533"/>
<dbReference type="KEGG" id="hsa:388533"/>
<dbReference type="MANE-Select" id="ENST00000338897.4">
    <property type="protein sequence ID" value="ENSP00000339251.3"/>
    <property type="RefSeq nucleotide sequence ID" value="NM_207392.3"/>
    <property type="RefSeq protein sequence ID" value="NP_997275.1"/>
</dbReference>
<dbReference type="UCSC" id="uc002nzh.4">
    <molecule id="P60985-1"/>
    <property type="organism name" value="human"/>
</dbReference>
<dbReference type="AGR" id="HGNC:16313"/>
<dbReference type="CTD" id="388533"/>
<dbReference type="DisGeNET" id="388533"/>
<dbReference type="GeneCards" id="KRTDAP"/>
<dbReference type="HGNC" id="HGNC:16313">
    <property type="gene designation" value="KRTDAP"/>
</dbReference>
<dbReference type="HPA" id="ENSG00000188508">
    <property type="expression patterns" value="Group enriched (skin, vagina)"/>
</dbReference>
<dbReference type="neXtProt" id="NX_P60985"/>
<dbReference type="OpenTargets" id="ENSG00000188508"/>
<dbReference type="PharmGKB" id="PA30236"/>
<dbReference type="VEuPathDB" id="HostDB:ENSG00000188508"/>
<dbReference type="eggNOG" id="ENOG502STEA">
    <property type="taxonomic scope" value="Eukaryota"/>
</dbReference>
<dbReference type="GeneTree" id="ENSGT00390000009097"/>
<dbReference type="HOGENOM" id="CLU_183149_0_0_1"/>
<dbReference type="InParanoid" id="P60985"/>
<dbReference type="OMA" id="WRSAFQS"/>
<dbReference type="OrthoDB" id="9627508at2759"/>
<dbReference type="PAN-GO" id="P60985">
    <property type="GO annotations" value="2 GO annotations based on evolutionary models"/>
</dbReference>
<dbReference type="PhylomeDB" id="P60985"/>
<dbReference type="TreeFam" id="TF341267"/>
<dbReference type="PathwayCommons" id="P60985"/>
<dbReference type="Reactome" id="R-HSA-9725554">
    <property type="pathway name" value="Differentiation of Keratinocytes in Interfollicular Epidermis in Mammalian Skin"/>
</dbReference>
<dbReference type="BioGRID-ORCS" id="388533">
    <property type="hits" value="23 hits in 1137 CRISPR screens"/>
</dbReference>
<dbReference type="ChiTaRS" id="KRTDAP">
    <property type="organism name" value="human"/>
</dbReference>
<dbReference type="GeneWiki" id="KRTDAP"/>
<dbReference type="GenomeRNAi" id="388533"/>
<dbReference type="Pharos" id="P60985">
    <property type="development level" value="Tdark"/>
</dbReference>
<dbReference type="PRO" id="PR:P60985"/>
<dbReference type="Proteomes" id="UP000005640">
    <property type="component" value="Chromosome 19"/>
</dbReference>
<dbReference type="RNAct" id="P60985">
    <property type="molecule type" value="protein"/>
</dbReference>
<dbReference type="Bgee" id="ENSG00000188508">
    <property type="expression patterns" value="Expressed in penis and 105 other cell types or tissues"/>
</dbReference>
<dbReference type="GO" id="GO:0005615">
    <property type="term" value="C:extracellular space"/>
    <property type="evidence" value="ECO:0000314"/>
    <property type="project" value="UniProtKB"/>
</dbReference>
<dbReference type="GO" id="GO:0042599">
    <property type="term" value="C:lamellar body"/>
    <property type="evidence" value="ECO:0000314"/>
    <property type="project" value="UniProtKB"/>
</dbReference>
<dbReference type="GO" id="GO:0030154">
    <property type="term" value="P:cell differentiation"/>
    <property type="evidence" value="ECO:0007669"/>
    <property type="project" value="UniProtKB-KW"/>
</dbReference>
<dbReference type="GO" id="GO:0008544">
    <property type="term" value="P:epidermis development"/>
    <property type="evidence" value="ECO:0000318"/>
    <property type="project" value="GO_Central"/>
</dbReference>
<dbReference type="InterPro" id="IPR028196">
    <property type="entry name" value="KRTDAP"/>
</dbReference>
<dbReference type="PANTHER" id="PTHR36463">
    <property type="entry name" value="KERATINOCYTE DIFFERENTIATION-ASSOCIATED PROTEIN"/>
    <property type="match status" value="1"/>
</dbReference>
<dbReference type="PANTHER" id="PTHR36463:SF1">
    <property type="entry name" value="KERATINOCYTE DIFFERENTIATION-ASSOCIATED PROTEIN"/>
    <property type="match status" value="1"/>
</dbReference>
<dbReference type="Pfam" id="PF15200">
    <property type="entry name" value="KRTDAP"/>
    <property type="match status" value="1"/>
</dbReference>
<accession>P60985</accession>
<accession>A1L4D7</accession>
<reference key="1">
    <citation type="journal article" date="2004" name="J. Invest. Dermatol.">
        <title>Characterization of Kdap, a protein secreted by keratinocytes.</title>
        <authorList>
            <person name="Tsuchida S."/>
            <person name="Bonkobara M."/>
            <person name="McMillan J.R."/>
            <person name="Akiyama M."/>
            <person name="Yudate T."/>
            <person name="Aragane Y."/>
            <person name="Tezuka T."/>
            <person name="Shimizu H."/>
            <person name="Cruz P.D. Jr."/>
            <person name="Ariizumi K."/>
        </authorList>
    </citation>
    <scope>NUCLEOTIDE SEQUENCE [MRNA] (ISOFORMS 1 AND 2)</scope>
    <scope>FUNCTION</scope>
    <scope>SUBCELLULAR LOCATION</scope>
    <scope>TISSUE SPECIFICITY</scope>
    <scope>INDUCTION</scope>
    <scope>ALTERNATIVE SPLICING</scope>
</reference>
<reference key="2">
    <citation type="journal article" date="2003" name="Genome Res.">
        <title>The secreted protein discovery initiative (SPDI), a large-scale effort to identify novel human secreted and transmembrane proteins: a bioinformatics assessment.</title>
        <authorList>
            <person name="Clark H.F."/>
            <person name="Gurney A.L."/>
            <person name="Abaya E."/>
            <person name="Baker K."/>
            <person name="Baldwin D.T."/>
            <person name="Brush J."/>
            <person name="Chen J."/>
            <person name="Chow B."/>
            <person name="Chui C."/>
            <person name="Crowley C."/>
            <person name="Currell B."/>
            <person name="Deuel B."/>
            <person name="Dowd P."/>
            <person name="Eaton D."/>
            <person name="Foster J.S."/>
            <person name="Grimaldi C."/>
            <person name="Gu Q."/>
            <person name="Hass P.E."/>
            <person name="Heldens S."/>
            <person name="Huang A."/>
            <person name="Kim H.S."/>
            <person name="Klimowski L."/>
            <person name="Jin Y."/>
            <person name="Johnson S."/>
            <person name="Lee J."/>
            <person name="Lewis L."/>
            <person name="Liao D."/>
            <person name="Mark M.R."/>
            <person name="Robbie E."/>
            <person name="Sanchez C."/>
            <person name="Schoenfeld J."/>
            <person name="Seshagiri S."/>
            <person name="Simmons L."/>
            <person name="Singh J."/>
            <person name="Smith V."/>
            <person name="Stinson J."/>
            <person name="Vagts A."/>
            <person name="Vandlen R.L."/>
            <person name="Watanabe C."/>
            <person name="Wieand D."/>
            <person name="Woods K."/>
            <person name="Xie M.-H."/>
            <person name="Yansura D.G."/>
            <person name="Yi S."/>
            <person name="Yu G."/>
            <person name="Yuan J."/>
            <person name="Zhang M."/>
            <person name="Zhang Z."/>
            <person name="Goddard A.D."/>
            <person name="Wood W.I."/>
            <person name="Godowski P.J."/>
            <person name="Gray A.M."/>
        </authorList>
    </citation>
    <scope>NUCLEOTIDE SEQUENCE [LARGE SCALE MRNA] (ISOFORM 1)</scope>
</reference>
<reference key="3">
    <citation type="journal article" date="2004" name="Genome Res.">
        <title>The status, quality, and expansion of the NIH full-length cDNA project: the Mammalian Gene Collection (MGC).</title>
        <authorList>
            <consortium name="The MGC Project Team"/>
        </authorList>
    </citation>
    <scope>NUCLEOTIDE SEQUENCE [LARGE SCALE MRNA] (ISOFORM 1)</scope>
    <source>
        <tissue>Testis</tissue>
    </source>
</reference>
<proteinExistence type="evidence at protein level"/>
<name>KTDAP_HUMAN</name>
<gene>
    <name type="primary">KRTDAP</name>
    <name type="synonym">KDAP</name>
    <name type="ORF">UNQ467/PRO826</name>
</gene>
<keyword id="KW-0025">Alternative splicing</keyword>
<keyword id="KW-0221">Differentiation</keyword>
<keyword id="KW-1267">Proteomics identification</keyword>
<keyword id="KW-1185">Reference proteome</keyword>
<keyword id="KW-0964">Secreted</keyword>
<keyword id="KW-0732">Signal</keyword>
<evidence type="ECO:0000255" key="1"/>
<evidence type="ECO:0000269" key="2">
    <source>
    </source>
</evidence>
<evidence type="ECO:0000303" key="3">
    <source>
    </source>
</evidence>
<organism>
    <name type="scientific">Homo sapiens</name>
    <name type="common">Human</name>
    <dbReference type="NCBI Taxonomy" id="9606"/>
    <lineage>
        <taxon>Eukaryota</taxon>
        <taxon>Metazoa</taxon>
        <taxon>Chordata</taxon>
        <taxon>Craniata</taxon>
        <taxon>Vertebrata</taxon>
        <taxon>Euteleostomi</taxon>
        <taxon>Mammalia</taxon>
        <taxon>Eutheria</taxon>
        <taxon>Euarchontoglires</taxon>
        <taxon>Primates</taxon>
        <taxon>Haplorrhini</taxon>
        <taxon>Catarrhini</taxon>
        <taxon>Hominidae</taxon>
        <taxon>Homo</taxon>
    </lineage>
</organism>
<sequence>MKIPVLPAVVLLSLLVLHSAQGATLGGPEEESTIENYASRPEAFNTPFLNIDKLRSAFKADEFLNWHALFESIKRKLPFLNWDAFPKLKGLRSATPDAQ</sequence>
<protein>
    <recommendedName>
        <fullName>Keratinocyte differentiation-associated protein</fullName>
    </recommendedName>
</protein>
<comment type="function">
    <text evidence="2">May act as a soluble regulator of keratinocyte differentiation. May play an important role in embryonic skin morphogenesis.</text>
</comment>
<comment type="subcellular location">
    <subcellularLocation>
        <location evidence="2">Secreted</location>
    </subcellularLocation>
</comment>
<comment type="alternative products">
    <event type="alternative splicing"/>
    <isoform>
        <id>P60985-1</id>
        <name>1</name>
        <sequence type="displayed"/>
    </isoform>
    <isoform>
        <id>P60985-2</id>
        <name>2</name>
        <sequence type="described" ref="VSP_030856"/>
    </isoform>
</comment>
<comment type="tissue specificity">
    <text evidence="2">Highly expressed in skin and detected at lower levels in thymus. In skin, found exclusively in lamellar granules of granular keratinocytes and in the intracellular space of the stratum corneum. Also highly expressed in oral mucosa, tongue, esophagus, and stomach, and at much lower levels in bladder and uterus. Not detected in gastrointestinal mucosa.</text>
</comment>
<comment type="induction">
    <text evidence="2">Up-regulated in situ in psoriatic skin (at protein level).</text>
</comment>